<keyword id="KW-0963">Cytoplasm</keyword>
<keyword id="KW-0227">DNA damage</keyword>
<keyword id="KW-0233">DNA recombination</keyword>
<keyword id="KW-0234">DNA repair</keyword>
<keyword id="KW-0238">DNA-binding</keyword>
<keyword id="KW-1185">Reference proteome</keyword>
<reference key="1">
    <citation type="journal article" date="2011" name="J. Bacteriol.">
        <title>Genome of Ochrobactrum anthropi ATCC 49188 T, a versatile opportunistic pathogen and symbiont of several eukaryotic hosts.</title>
        <authorList>
            <person name="Chain P.S."/>
            <person name="Lang D.M."/>
            <person name="Comerci D.J."/>
            <person name="Malfatti S.A."/>
            <person name="Vergez L.M."/>
            <person name="Shin M."/>
            <person name="Ugalde R.A."/>
            <person name="Garcia E."/>
            <person name="Tolmasky M.E."/>
        </authorList>
    </citation>
    <scope>NUCLEOTIDE SEQUENCE [LARGE SCALE GENOMIC DNA]</scope>
    <source>
        <strain>ATCC 49188 / DSM 6882 / CCUG 24695 / JCM 21032 / LMG 3331 / NBRC 15819 / NCTC 12168 / Alc 37</strain>
    </source>
</reference>
<gene>
    <name evidence="1" type="primary">ruvA</name>
    <name type="ordered locus">Oant_1212</name>
</gene>
<sequence length="205" mass="21310">MIGKLKGVIDEIAEDHAVIDVHGVGYVAFCSARTLGNLGGVGEAAILFIETYVREDMIRLYGFANQLEREWFRLLQNVQGVGAKVALAVLGTLSPSELANAIALRDIAMVSRAPGVGKKVAERIVTELKNKAPAFAGDASGTIGLKQELGAGAAPAPVADAVSALSNLGYSRDQAANAVAAALKEAGENADSAKLIRLGLKELSR</sequence>
<accession>A6WY75</accession>
<organism>
    <name type="scientific">Brucella anthropi (strain ATCC 49188 / DSM 6882 / CCUG 24695 / JCM 21032 / LMG 3331 / NBRC 15819 / NCTC 12168 / Alc 37)</name>
    <name type="common">Ochrobactrum anthropi</name>
    <dbReference type="NCBI Taxonomy" id="439375"/>
    <lineage>
        <taxon>Bacteria</taxon>
        <taxon>Pseudomonadati</taxon>
        <taxon>Pseudomonadota</taxon>
        <taxon>Alphaproteobacteria</taxon>
        <taxon>Hyphomicrobiales</taxon>
        <taxon>Brucellaceae</taxon>
        <taxon>Brucella/Ochrobactrum group</taxon>
        <taxon>Brucella</taxon>
    </lineage>
</organism>
<comment type="function">
    <text evidence="1">The RuvA-RuvB-RuvC complex processes Holliday junction (HJ) DNA during genetic recombination and DNA repair, while the RuvA-RuvB complex plays an important role in the rescue of blocked DNA replication forks via replication fork reversal (RFR). RuvA specifically binds to HJ cruciform DNA, conferring on it an open structure. The RuvB hexamer acts as an ATP-dependent pump, pulling dsDNA into and through the RuvAB complex. HJ branch migration allows RuvC to scan DNA until it finds its consensus sequence, where it cleaves and resolves the cruciform DNA.</text>
</comment>
<comment type="subunit">
    <text evidence="1">Homotetramer. Forms an RuvA(8)-RuvB(12)-Holliday junction (HJ) complex. HJ DNA is sandwiched between 2 RuvA tetramers; dsDNA enters through RuvA and exits via RuvB. An RuvB hexamer assembles on each DNA strand where it exits the tetramer. Each RuvB hexamer is contacted by two RuvA subunits (via domain III) on 2 adjacent RuvB subunits; this complex drives branch migration. In the full resolvosome a probable DNA-RuvA(4)-RuvB(12)-RuvC(2) complex forms which resolves the HJ.</text>
</comment>
<comment type="subcellular location">
    <subcellularLocation>
        <location evidence="1">Cytoplasm</location>
    </subcellularLocation>
</comment>
<comment type="domain">
    <text evidence="1">Has three domains with a flexible linker between the domains II and III and assumes an 'L' shape. Domain III is highly mobile and contacts RuvB.</text>
</comment>
<comment type="similarity">
    <text evidence="1">Belongs to the RuvA family.</text>
</comment>
<protein>
    <recommendedName>
        <fullName evidence="1">Holliday junction branch migration complex subunit RuvA</fullName>
    </recommendedName>
</protein>
<evidence type="ECO:0000255" key="1">
    <source>
        <dbReference type="HAMAP-Rule" id="MF_00031"/>
    </source>
</evidence>
<proteinExistence type="inferred from homology"/>
<dbReference type="EMBL" id="CP000758">
    <property type="protein sequence ID" value="ABS13929.1"/>
    <property type="molecule type" value="Genomic_DNA"/>
</dbReference>
<dbReference type="RefSeq" id="WP_012091334.1">
    <property type="nucleotide sequence ID" value="NC_009667.1"/>
</dbReference>
<dbReference type="SMR" id="A6WY75"/>
<dbReference type="STRING" id="439375.Oant_1212"/>
<dbReference type="KEGG" id="oan:Oant_1212"/>
<dbReference type="PATRIC" id="fig|439375.7.peg.1267"/>
<dbReference type="eggNOG" id="COG0632">
    <property type="taxonomic scope" value="Bacteria"/>
</dbReference>
<dbReference type="HOGENOM" id="CLU_087936_3_0_5"/>
<dbReference type="Proteomes" id="UP000002301">
    <property type="component" value="Chromosome 1"/>
</dbReference>
<dbReference type="GO" id="GO:0005737">
    <property type="term" value="C:cytoplasm"/>
    <property type="evidence" value="ECO:0007669"/>
    <property type="project" value="UniProtKB-SubCell"/>
</dbReference>
<dbReference type="GO" id="GO:0009379">
    <property type="term" value="C:Holliday junction helicase complex"/>
    <property type="evidence" value="ECO:0007669"/>
    <property type="project" value="InterPro"/>
</dbReference>
<dbReference type="GO" id="GO:0048476">
    <property type="term" value="C:Holliday junction resolvase complex"/>
    <property type="evidence" value="ECO:0007669"/>
    <property type="project" value="UniProtKB-UniRule"/>
</dbReference>
<dbReference type="GO" id="GO:0005524">
    <property type="term" value="F:ATP binding"/>
    <property type="evidence" value="ECO:0007669"/>
    <property type="project" value="InterPro"/>
</dbReference>
<dbReference type="GO" id="GO:0000400">
    <property type="term" value="F:four-way junction DNA binding"/>
    <property type="evidence" value="ECO:0007669"/>
    <property type="project" value="UniProtKB-UniRule"/>
</dbReference>
<dbReference type="GO" id="GO:0009378">
    <property type="term" value="F:four-way junction helicase activity"/>
    <property type="evidence" value="ECO:0007669"/>
    <property type="project" value="InterPro"/>
</dbReference>
<dbReference type="GO" id="GO:0006310">
    <property type="term" value="P:DNA recombination"/>
    <property type="evidence" value="ECO:0007669"/>
    <property type="project" value="UniProtKB-UniRule"/>
</dbReference>
<dbReference type="GO" id="GO:0006281">
    <property type="term" value="P:DNA repair"/>
    <property type="evidence" value="ECO:0007669"/>
    <property type="project" value="UniProtKB-UniRule"/>
</dbReference>
<dbReference type="Gene3D" id="1.10.150.20">
    <property type="entry name" value="5' to 3' exonuclease, C-terminal subdomain"/>
    <property type="match status" value="1"/>
</dbReference>
<dbReference type="Gene3D" id="1.10.8.10">
    <property type="entry name" value="DNA helicase RuvA subunit, C-terminal domain"/>
    <property type="match status" value="1"/>
</dbReference>
<dbReference type="Gene3D" id="2.40.50.140">
    <property type="entry name" value="Nucleic acid-binding proteins"/>
    <property type="match status" value="1"/>
</dbReference>
<dbReference type="HAMAP" id="MF_00031">
    <property type="entry name" value="DNA_HJ_migration_RuvA"/>
    <property type="match status" value="1"/>
</dbReference>
<dbReference type="InterPro" id="IPR013849">
    <property type="entry name" value="DNA_helicase_Holl-junc_RuvA_I"/>
</dbReference>
<dbReference type="InterPro" id="IPR003583">
    <property type="entry name" value="Hlx-hairpin-Hlx_DNA-bd_motif"/>
</dbReference>
<dbReference type="InterPro" id="IPR012340">
    <property type="entry name" value="NA-bd_OB-fold"/>
</dbReference>
<dbReference type="InterPro" id="IPR000085">
    <property type="entry name" value="RuvA"/>
</dbReference>
<dbReference type="InterPro" id="IPR010994">
    <property type="entry name" value="RuvA_2-like"/>
</dbReference>
<dbReference type="InterPro" id="IPR011114">
    <property type="entry name" value="RuvA_C"/>
</dbReference>
<dbReference type="InterPro" id="IPR036267">
    <property type="entry name" value="RuvA_C_sf"/>
</dbReference>
<dbReference type="NCBIfam" id="TIGR00084">
    <property type="entry name" value="ruvA"/>
    <property type="match status" value="1"/>
</dbReference>
<dbReference type="Pfam" id="PF14520">
    <property type="entry name" value="HHH_5"/>
    <property type="match status" value="1"/>
</dbReference>
<dbReference type="Pfam" id="PF07499">
    <property type="entry name" value="RuvA_C"/>
    <property type="match status" value="1"/>
</dbReference>
<dbReference type="Pfam" id="PF01330">
    <property type="entry name" value="RuvA_N"/>
    <property type="match status" value="1"/>
</dbReference>
<dbReference type="SMART" id="SM00278">
    <property type="entry name" value="HhH1"/>
    <property type="match status" value="2"/>
</dbReference>
<dbReference type="SUPFAM" id="SSF46929">
    <property type="entry name" value="DNA helicase RuvA subunit, C-terminal domain"/>
    <property type="match status" value="1"/>
</dbReference>
<dbReference type="SUPFAM" id="SSF50249">
    <property type="entry name" value="Nucleic acid-binding proteins"/>
    <property type="match status" value="1"/>
</dbReference>
<dbReference type="SUPFAM" id="SSF47781">
    <property type="entry name" value="RuvA domain 2-like"/>
    <property type="match status" value="1"/>
</dbReference>
<name>RUVA_BRUA4</name>
<feature type="chain" id="PRO_1000002503" description="Holliday junction branch migration complex subunit RuvA">
    <location>
        <begin position="1"/>
        <end position="205"/>
    </location>
</feature>
<feature type="region of interest" description="Domain I" evidence="1">
    <location>
        <begin position="1"/>
        <end position="64"/>
    </location>
</feature>
<feature type="region of interest" description="Domain II" evidence="1">
    <location>
        <begin position="65"/>
        <end position="143"/>
    </location>
</feature>
<feature type="region of interest" description="Flexible linker" evidence="1">
    <location>
        <begin position="144"/>
        <end position="152"/>
    </location>
</feature>
<feature type="region of interest" description="Domain III" evidence="1">
    <location>
        <begin position="153"/>
        <end position="205"/>
    </location>
</feature>